<gene>
    <name evidence="1" type="primary">argR</name>
    <name type="ordered locus">VV0466</name>
</gene>
<dbReference type="EMBL" id="BA000037">
    <property type="protein sequence ID" value="BAC93230.1"/>
    <property type="status" value="ALT_INIT"/>
    <property type="molecule type" value="Genomic_DNA"/>
</dbReference>
<dbReference type="RefSeq" id="WP_011078752.1">
    <property type="nucleotide sequence ID" value="NC_005139.1"/>
</dbReference>
<dbReference type="PDB" id="3V4G">
    <property type="method" value="X-ray"/>
    <property type="resolution" value="1.60 A"/>
    <property type="chains" value="A=1-156"/>
</dbReference>
<dbReference type="PDBsum" id="3V4G"/>
<dbReference type="SMR" id="Q7MP98"/>
<dbReference type="STRING" id="672.VV93_v1c04340"/>
<dbReference type="GeneID" id="93894981"/>
<dbReference type="KEGG" id="vvy:VV0466"/>
<dbReference type="eggNOG" id="COG1438">
    <property type="taxonomic scope" value="Bacteria"/>
</dbReference>
<dbReference type="HOGENOM" id="CLU_097103_2_0_6"/>
<dbReference type="UniPathway" id="UPA00068"/>
<dbReference type="EvolutionaryTrace" id="Q7MP98"/>
<dbReference type="Proteomes" id="UP000002675">
    <property type="component" value="Chromosome I"/>
</dbReference>
<dbReference type="GO" id="GO:0005737">
    <property type="term" value="C:cytoplasm"/>
    <property type="evidence" value="ECO:0007669"/>
    <property type="project" value="UniProtKB-SubCell"/>
</dbReference>
<dbReference type="GO" id="GO:0034618">
    <property type="term" value="F:arginine binding"/>
    <property type="evidence" value="ECO:0007669"/>
    <property type="project" value="InterPro"/>
</dbReference>
<dbReference type="GO" id="GO:0003677">
    <property type="term" value="F:DNA binding"/>
    <property type="evidence" value="ECO:0007669"/>
    <property type="project" value="UniProtKB-KW"/>
</dbReference>
<dbReference type="GO" id="GO:0003700">
    <property type="term" value="F:DNA-binding transcription factor activity"/>
    <property type="evidence" value="ECO:0007669"/>
    <property type="project" value="UniProtKB-UniRule"/>
</dbReference>
<dbReference type="GO" id="GO:0006526">
    <property type="term" value="P:L-arginine biosynthetic process"/>
    <property type="evidence" value="ECO:0007669"/>
    <property type="project" value="UniProtKB-UniPathway"/>
</dbReference>
<dbReference type="GO" id="GO:0051259">
    <property type="term" value="P:protein complex oligomerization"/>
    <property type="evidence" value="ECO:0007669"/>
    <property type="project" value="InterPro"/>
</dbReference>
<dbReference type="GO" id="GO:1900079">
    <property type="term" value="P:regulation of arginine biosynthetic process"/>
    <property type="evidence" value="ECO:0007669"/>
    <property type="project" value="UniProtKB-UniRule"/>
</dbReference>
<dbReference type="FunFam" id="1.10.10.10:FF:000074">
    <property type="entry name" value="Arginine repressor"/>
    <property type="match status" value="1"/>
</dbReference>
<dbReference type="Gene3D" id="3.30.1360.40">
    <property type="match status" value="1"/>
</dbReference>
<dbReference type="Gene3D" id="1.10.10.10">
    <property type="entry name" value="Winged helix-like DNA-binding domain superfamily/Winged helix DNA-binding domain"/>
    <property type="match status" value="1"/>
</dbReference>
<dbReference type="HAMAP" id="MF_00173">
    <property type="entry name" value="Arg_repressor"/>
    <property type="match status" value="1"/>
</dbReference>
<dbReference type="InterPro" id="IPR001669">
    <property type="entry name" value="Arg_repress"/>
</dbReference>
<dbReference type="InterPro" id="IPR020899">
    <property type="entry name" value="Arg_repress_C"/>
</dbReference>
<dbReference type="InterPro" id="IPR036251">
    <property type="entry name" value="Arg_repress_C_sf"/>
</dbReference>
<dbReference type="InterPro" id="IPR020900">
    <property type="entry name" value="Arg_repress_DNA-bd"/>
</dbReference>
<dbReference type="InterPro" id="IPR036388">
    <property type="entry name" value="WH-like_DNA-bd_sf"/>
</dbReference>
<dbReference type="InterPro" id="IPR036390">
    <property type="entry name" value="WH_DNA-bd_sf"/>
</dbReference>
<dbReference type="NCBIfam" id="TIGR01529">
    <property type="entry name" value="argR_whole"/>
    <property type="match status" value="1"/>
</dbReference>
<dbReference type="NCBIfam" id="NF003457">
    <property type="entry name" value="PRK05066.1"/>
    <property type="match status" value="1"/>
</dbReference>
<dbReference type="PANTHER" id="PTHR34471">
    <property type="entry name" value="ARGININE REPRESSOR"/>
    <property type="match status" value="1"/>
</dbReference>
<dbReference type="PANTHER" id="PTHR34471:SF1">
    <property type="entry name" value="ARGININE REPRESSOR"/>
    <property type="match status" value="1"/>
</dbReference>
<dbReference type="Pfam" id="PF01316">
    <property type="entry name" value="Arg_repressor"/>
    <property type="match status" value="1"/>
</dbReference>
<dbReference type="Pfam" id="PF02863">
    <property type="entry name" value="Arg_repressor_C"/>
    <property type="match status" value="1"/>
</dbReference>
<dbReference type="PRINTS" id="PR01467">
    <property type="entry name" value="ARGREPRESSOR"/>
</dbReference>
<dbReference type="SUPFAM" id="SSF55252">
    <property type="entry name" value="C-terminal domain of arginine repressor"/>
    <property type="match status" value="1"/>
</dbReference>
<dbReference type="SUPFAM" id="SSF46785">
    <property type="entry name" value="Winged helix' DNA-binding domain"/>
    <property type="match status" value="1"/>
</dbReference>
<accession>Q7MP98</accession>
<evidence type="ECO:0000255" key="1">
    <source>
        <dbReference type="HAMAP-Rule" id="MF_00173"/>
    </source>
</evidence>
<evidence type="ECO:0000305" key="2"/>
<evidence type="ECO:0007829" key="3">
    <source>
        <dbReference type="PDB" id="3V4G"/>
    </source>
</evidence>
<organism>
    <name type="scientific">Vibrio vulnificus (strain YJ016)</name>
    <dbReference type="NCBI Taxonomy" id="196600"/>
    <lineage>
        <taxon>Bacteria</taxon>
        <taxon>Pseudomonadati</taxon>
        <taxon>Pseudomonadota</taxon>
        <taxon>Gammaproteobacteria</taxon>
        <taxon>Vibrionales</taxon>
        <taxon>Vibrionaceae</taxon>
        <taxon>Vibrio</taxon>
    </lineage>
</organism>
<proteinExistence type="evidence at protein level"/>
<sequence>MRPSEKQDNLVRAFKALLKEERFGSQGEIVEALKQEGFENINQSKVSRMLTKFGAVRTRNAKMEMVYCLPTELGVPTVSSSLRELVLDVDHNQALVVIHTGPGAAQLIARMLDSLGKSEGILGVVAGDDTIFITPTLTITTEQLFKSVCELFEYAG</sequence>
<keyword id="KW-0002">3D-structure</keyword>
<keyword id="KW-0028">Amino-acid biosynthesis</keyword>
<keyword id="KW-0055">Arginine biosynthesis</keyword>
<keyword id="KW-0963">Cytoplasm</keyword>
<keyword id="KW-0238">DNA-binding</keyword>
<keyword id="KW-0678">Repressor</keyword>
<keyword id="KW-0804">Transcription</keyword>
<keyword id="KW-0805">Transcription regulation</keyword>
<protein>
    <recommendedName>
        <fullName evidence="1">Arginine repressor</fullName>
    </recommendedName>
</protein>
<reference key="1">
    <citation type="journal article" date="2003" name="Genome Res.">
        <title>Comparative genome analysis of Vibrio vulnificus, a marine pathogen.</title>
        <authorList>
            <person name="Chen C.-Y."/>
            <person name="Wu K.-M."/>
            <person name="Chang Y.-C."/>
            <person name="Chang C.-H."/>
            <person name="Tsai H.-C."/>
            <person name="Liao T.-L."/>
            <person name="Liu Y.-M."/>
            <person name="Chen H.-J."/>
            <person name="Shen A.B.-T."/>
            <person name="Li J.-C."/>
            <person name="Su T.-L."/>
            <person name="Shao C.-P."/>
            <person name="Lee C.-T."/>
            <person name="Hor L.-I."/>
            <person name="Tsai S.-F."/>
        </authorList>
    </citation>
    <scope>NUCLEOTIDE SEQUENCE [LARGE SCALE GENOMIC DNA]</scope>
    <source>
        <strain>YJ016</strain>
    </source>
</reference>
<name>ARGR_VIBVY</name>
<comment type="function">
    <text evidence="1">Regulates arginine biosynthesis genes.</text>
</comment>
<comment type="pathway">
    <text>Amino-acid biosynthesis; L-arginine biosynthesis [regulation].</text>
</comment>
<comment type="subcellular location">
    <subcellularLocation>
        <location evidence="1">Cytoplasm</location>
    </subcellularLocation>
</comment>
<comment type="similarity">
    <text evidence="1">Belongs to the ArgR family.</text>
</comment>
<comment type="sequence caution" evidence="2">
    <conflict type="erroneous initiation">
        <sequence resource="EMBL-CDS" id="BAC93230"/>
    </conflict>
</comment>
<feature type="chain" id="PRO_0000205142" description="Arginine repressor">
    <location>
        <begin position="1"/>
        <end position="156"/>
    </location>
</feature>
<feature type="helix" evidence="3">
    <location>
        <begin position="7"/>
        <end position="20"/>
    </location>
</feature>
<feature type="helix" evidence="3">
    <location>
        <begin position="26"/>
        <end position="35"/>
    </location>
</feature>
<feature type="helix" evidence="3">
    <location>
        <begin position="43"/>
        <end position="52"/>
    </location>
</feature>
<feature type="strand" evidence="3">
    <location>
        <begin position="56"/>
        <end position="59"/>
    </location>
</feature>
<feature type="strand" evidence="3">
    <location>
        <begin position="65"/>
        <end position="68"/>
    </location>
</feature>
<feature type="helix" evidence="3">
    <location>
        <begin position="83"/>
        <end position="85"/>
    </location>
</feature>
<feature type="strand" evidence="3">
    <location>
        <begin position="86"/>
        <end position="91"/>
    </location>
</feature>
<feature type="strand" evidence="3">
    <location>
        <begin position="96"/>
        <end position="101"/>
    </location>
</feature>
<feature type="helix" evidence="3">
    <location>
        <begin position="105"/>
        <end position="115"/>
    </location>
</feature>
<feature type="helix" evidence="3">
    <location>
        <begin position="117"/>
        <end position="119"/>
    </location>
</feature>
<feature type="strand" evidence="3">
    <location>
        <begin position="121"/>
        <end position="126"/>
    </location>
</feature>
<feature type="strand" evidence="3">
    <location>
        <begin position="128"/>
        <end position="135"/>
    </location>
</feature>
<feature type="helix" evidence="3">
    <location>
        <begin position="141"/>
        <end position="152"/>
    </location>
</feature>